<keyword id="KW-0997">Cell inner membrane</keyword>
<keyword id="KW-1003">Cell membrane</keyword>
<keyword id="KW-0472">Membrane</keyword>
<keyword id="KW-0520">NAD</keyword>
<keyword id="KW-0874">Quinone</keyword>
<keyword id="KW-1278">Translocase</keyword>
<keyword id="KW-0812">Transmembrane</keyword>
<keyword id="KW-1133">Transmembrane helix</keyword>
<keyword id="KW-0813">Transport</keyword>
<keyword id="KW-0830">Ubiquinone</keyword>
<accession>Q6N5N4</accession>
<gene>
    <name evidence="1" type="primary">nuoK1</name>
    <name type="ordered locus">RPA2940</name>
</gene>
<proteinExistence type="inferred from homology"/>
<dbReference type="EC" id="7.1.1.-" evidence="1"/>
<dbReference type="EMBL" id="BX572602">
    <property type="protein sequence ID" value="CAE28381.1"/>
    <property type="molecule type" value="Genomic_DNA"/>
</dbReference>
<dbReference type="SMR" id="Q6N5N4"/>
<dbReference type="STRING" id="258594.RPA2940"/>
<dbReference type="eggNOG" id="COG0713">
    <property type="taxonomic scope" value="Bacteria"/>
</dbReference>
<dbReference type="HOGENOM" id="CLU_144724_2_0_5"/>
<dbReference type="PhylomeDB" id="Q6N5N4"/>
<dbReference type="GO" id="GO:0030964">
    <property type="term" value="C:NADH dehydrogenase complex"/>
    <property type="evidence" value="ECO:0007669"/>
    <property type="project" value="TreeGrafter"/>
</dbReference>
<dbReference type="GO" id="GO:0005886">
    <property type="term" value="C:plasma membrane"/>
    <property type="evidence" value="ECO:0007669"/>
    <property type="project" value="UniProtKB-SubCell"/>
</dbReference>
<dbReference type="GO" id="GO:0050136">
    <property type="term" value="F:NADH:ubiquinone reductase (non-electrogenic) activity"/>
    <property type="evidence" value="ECO:0007669"/>
    <property type="project" value="UniProtKB-UniRule"/>
</dbReference>
<dbReference type="GO" id="GO:0048038">
    <property type="term" value="F:quinone binding"/>
    <property type="evidence" value="ECO:0007669"/>
    <property type="project" value="UniProtKB-KW"/>
</dbReference>
<dbReference type="GO" id="GO:0042773">
    <property type="term" value="P:ATP synthesis coupled electron transport"/>
    <property type="evidence" value="ECO:0007669"/>
    <property type="project" value="InterPro"/>
</dbReference>
<dbReference type="FunFam" id="1.10.287.3510:FF:000001">
    <property type="entry name" value="NADH-quinone oxidoreductase subunit K"/>
    <property type="match status" value="1"/>
</dbReference>
<dbReference type="Gene3D" id="1.10.287.3510">
    <property type="match status" value="1"/>
</dbReference>
<dbReference type="HAMAP" id="MF_01456">
    <property type="entry name" value="NDH1_NuoK"/>
    <property type="match status" value="1"/>
</dbReference>
<dbReference type="InterPro" id="IPR001133">
    <property type="entry name" value="NADH_UbQ_OxRdtase_chain4L/K"/>
</dbReference>
<dbReference type="InterPro" id="IPR039428">
    <property type="entry name" value="NUOK/Mnh_C1-like"/>
</dbReference>
<dbReference type="NCBIfam" id="NF004320">
    <property type="entry name" value="PRK05715.1-2"/>
    <property type="match status" value="1"/>
</dbReference>
<dbReference type="NCBIfam" id="NF004321">
    <property type="entry name" value="PRK05715.1-3"/>
    <property type="match status" value="1"/>
</dbReference>
<dbReference type="NCBIfam" id="NF004323">
    <property type="entry name" value="PRK05715.1-5"/>
    <property type="match status" value="1"/>
</dbReference>
<dbReference type="PANTHER" id="PTHR11434:SF21">
    <property type="entry name" value="NADH DEHYDROGENASE SUBUNIT 4L-RELATED"/>
    <property type="match status" value="1"/>
</dbReference>
<dbReference type="PANTHER" id="PTHR11434">
    <property type="entry name" value="NADH-UBIQUINONE OXIDOREDUCTASE SUBUNIT ND4L"/>
    <property type="match status" value="1"/>
</dbReference>
<dbReference type="Pfam" id="PF00420">
    <property type="entry name" value="Oxidored_q2"/>
    <property type="match status" value="1"/>
</dbReference>
<organism>
    <name type="scientific">Rhodopseudomonas palustris (strain ATCC BAA-98 / CGA009)</name>
    <dbReference type="NCBI Taxonomy" id="258594"/>
    <lineage>
        <taxon>Bacteria</taxon>
        <taxon>Pseudomonadati</taxon>
        <taxon>Pseudomonadota</taxon>
        <taxon>Alphaproteobacteria</taxon>
        <taxon>Hyphomicrobiales</taxon>
        <taxon>Nitrobacteraceae</taxon>
        <taxon>Rhodopseudomonas</taxon>
    </lineage>
</organism>
<name>NUOK1_RHOPA</name>
<evidence type="ECO:0000255" key="1">
    <source>
        <dbReference type="HAMAP-Rule" id="MF_01456"/>
    </source>
</evidence>
<protein>
    <recommendedName>
        <fullName evidence="1">NADH-quinone oxidoreductase subunit K 1</fullName>
        <ecNumber evidence="1">7.1.1.-</ecNumber>
    </recommendedName>
    <alternativeName>
        <fullName evidence="1">NADH dehydrogenase I subunit K 1</fullName>
    </alternativeName>
    <alternativeName>
        <fullName evidence="1">NDH-1 subunit K 1</fullName>
    </alternativeName>
</protein>
<reference key="1">
    <citation type="journal article" date="2004" name="Nat. Biotechnol.">
        <title>Complete genome sequence of the metabolically versatile photosynthetic bacterium Rhodopseudomonas palustris.</title>
        <authorList>
            <person name="Larimer F.W."/>
            <person name="Chain P."/>
            <person name="Hauser L."/>
            <person name="Lamerdin J.E."/>
            <person name="Malfatti S."/>
            <person name="Do L."/>
            <person name="Land M.L."/>
            <person name="Pelletier D.A."/>
            <person name="Beatty J.T."/>
            <person name="Lang A.S."/>
            <person name="Tabita F.R."/>
            <person name="Gibson J.L."/>
            <person name="Hanson T.E."/>
            <person name="Bobst C."/>
            <person name="Torres y Torres J.L."/>
            <person name="Peres C."/>
            <person name="Harrison F.H."/>
            <person name="Gibson J."/>
            <person name="Harwood C.S."/>
        </authorList>
    </citation>
    <scope>NUCLEOTIDE SEQUENCE [LARGE SCALE GENOMIC DNA]</scope>
    <source>
        <strain>ATCC BAA-98 / CGA009</strain>
    </source>
</reference>
<comment type="function">
    <text evidence="1">NDH-1 shuttles electrons from NADH, via FMN and iron-sulfur (Fe-S) centers, to quinones in the respiratory chain. The immediate electron acceptor for the enzyme in this species is believed to be ubiquinone. Couples the redox reaction to proton translocation (for every two electrons transferred, four hydrogen ions are translocated across the cytoplasmic membrane), and thus conserves the redox energy in a proton gradient.</text>
</comment>
<comment type="catalytic activity">
    <reaction evidence="1">
        <text>a quinone + NADH + 5 H(+)(in) = a quinol + NAD(+) + 4 H(+)(out)</text>
        <dbReference type="Rhea" id="RHEA:57888"/>
        <dbReference type="ChEBI" id="CHEBI:15378"/>
        <dbReference type="ChEBI" id="CHEBI:24646"/>
        <dbReference type="ChEBI" id="CHEBI:57540"/>
        <dbReference type="ChEBI" id="CHEBI:57945"/>
        <dbReference type="ChEBI" id="CHEBI:132124"/>
    </reaction>
</comment>
<comment type="subunit">
    <text evidence="1">NDH-1 is composed of 14 different subunits. Subunits NuoA, H, J, K, L, M, N constitute the membrane sector of the complex.</text>
</comment>
<comment type="subcellular location">
    <subcellularLocation>
        <location evidence="1">Cell inner membrane</location>
        <topology evidence="1">Multi-pass membrane protein</topology>
    </subcellularLocation>
</comment>
<comment type="similarity">
    <text evidence="1">Belongs to the complex I subunit 4L family.</text>
</comment>
<sequence>MNEIGLGHFLSVAAVLFTLGTLGIFLNRKNVIIILMSIELMLLAVNINLVAFSIYLNDIVGQVFALLVLTVAAAEAAIGLAVLVVFFRNRGTIAVQDINLMKG</sequence>
<feature type="chain" id="PRO_0000390207" description="NADH-quinone oxidoreductase subunit K 1">
    <location>
        <begin position="1"/>
        <end position="103"/>
    </location>
</feature>
<feature type="transmembrane region" description="Helical" evidence="1">
    <location>
        <begin position="6"/>
        <end position="26"/>
    </location>
</feature>
<feature type="transmembrane region" description="Helical" evidence="1">
    <location>
        <begin position="32"/>
        <end position="52"/>
    </location>
</feature>
<feature type="transmembrane region" description="Helical" evidence="1">
    <location>
        <begin position="67"/>
        <end position="87"/>
    </location>
</feature>